<comment type="function">
    <text evidence="10 14 16 17 18 21 22">Active metalloproteinase with gelatinolytic and collagenolytic activity. Plays a role in the wound healing process. Mediates both heterotypic intraepithelial cell/T-cell interactions and homotypic T-cell aggregation. Inhibits beta-1 integrin-mediated cell adhesion and migration of airway smooth muscle cells. Suppresses cell motility on or towards fibronectin possibly by driving alpha-v/beta-1 integrin (ITAGV-ITGB1) cell surface expression via ERK1/2 inactivation. Cleaves E-cadherin in response to growth factor deprivation. Plays a role in glomerular cell migration. Plays a role in pathological neovascularization. May play a role in cartilage remodeling. May be proteolytically processed, during sperm epididymal maturation and the acrosome reaction. May play a role in sperm-egg binding through its disintegrin domain.</text>
</comment>
<comment type="cofactor">
    <cofactor evidence="1">
        <name>Zn(2+)</name>
        <dbReference type="ChEBI" id="CHEBI:29105"/>
    </cofactor>
    <text evidence="1">Binds 1 zinc ion per subunit.</text>
</comment>
<comment type="activity regulation">
    <text evidence="23">Inhibited by hydroxamate-type metalloproteinase inhibitors such as marimastat. Inhibited by metalloproteinase inhibitor 2 (TIMP-2) and TIMP-3 at nanomolar concentrations. Not significantly inhibited by TIMP-1 at concentrations of up to 100 nM. Not activated by PMA or ionomycin.</text>
</comment>
<comment type="subunit">
    <text evidence="1 8 9 12 20 24 28 29">Interacts with ITAGV-ITGB3 (vitronectin receptor). Interacts with SH3GL2 and SNX9; this interaction occurs preferentially with ADAM15 precursor, rather than the processed form, suggesting it occurs in a secretory pathway compartment prior to the medial Golgi. Interacts with ITAG9-ITGB1 (By similarity). Interacts specifically with Src family protein-tyrosine kinases (PTKs). Interacts with SH3PXD2A. Interacts with ITAGV-ITGB1. Interacts with GRB2, HCK, ITSN1, ITSN2, LYN, MAPK1, MAPK3, NCF1, NCK1, nephrocystin, PTK6, SNX33, LCK and SRC.</text>
</comment>
<comment type="interaction">
    <interactant intactId="EBI-77818">
        <id>Q13444</id>
    </interactant>
    <interactant intactId="EBI-744695">
        <id>Q8N9N5</id>
        <label>BANP</label>
    </interactant>
    <organismsDiffer>false</organismsDiffer>
    <experiments>3</experiments>
</comment>
<comment type="interaction">
    <interactant intactId="EBI-77818">
        <id>Q13444</id>
    </interactant>
    <interactant intactId="EBI-624835">
        <id>Q06187</id>
        <label>BTK</label>
    </interactant>
    <organismsDiffer>false</organismsDiffer>
    <experiments>2</experiments>
</comment>
<comment type="interaction">
    <interactant intactId="EBI-77818">
        <id>Q13444</id>
    </interactant>
    <interactant intactId="EBI-741101">
        <id>Q13643</id>
        <label>FHL3</label>
    </interactant>
    <organismsDiffer>false</organismsDiffer>
    <experiments>3</experiments>
</comment>
<comment type="interaction">
    <interactant intactId="EBI-77818">
        <id>Q13444</id>
    </interactant>
    <interactant intactId="EBI-515315">
        <id>P06241</id>
        <label>FYN</label>
    </interactant>
    <organismsDiffer>false</organismsDiffer>
    <experiments>2</experiments>
</comment>
<comment type="interaction">
    <interactant intactId="EBI-77818">
        <id>Q13444</id>
    </interactant>
    <interactant intactId="EBI-401755">
        <id>P62993</id>
        <label>GRB2</label>
    </interactant>
    <organismsDiffer>false</organismsDiffer>
    <experiments>4</experiments>
</comment>
<comment type="interaction">
    <interactant intactId="EBI-77818">
        <id>Q13444</id>
    </interactant>
    <interactant intactId="EBI-346340">
        <id>P08631</id>
        <label>HCK</label>
    </interactant>
    <organismsDiffer>false</organismsDiffer>
    <experiments>4</experiments>
</comment>
<comment type="interaction">
    <interactant intactId="EBI-77818">
        <id>Q13444</id>
    </interactant>
    <interactant intactId="EBI-1348">
        <id>P06239</id>
        <label>LCK</label>
    </interactant>
    <organismsDiffer>false</organismsDiffer>
    <experiments>4</experiments>
</comment>
<comment type="interaction">
    <interactant intactId="EBI-77818">
        <id>Q13444</id>
    </interactant>
    <interactant intactId="EBI-79452">
        <id>P07948</id>
        <label>LYN</label>
    </interactant>
    <organismsDiffer>false</organismsDiffer>
    <experiments>2</experiments>
</comment>
<comment type="interaction">
    <interactant intactId="EBI-77818">
        <id>Q13444</id>
    </interactant>
    <interactant intactId="EBI-953828">
        <id>O15259</id>
        <label>NPHP1</label>
    </interactant>
    <organismsDiffer>false</organismsDiffer>
    <experiments>4</experiments>
</comment>
<comment type="interaction">
    <interactant intactId="EBI-77818">
        <id>Q13444</id>
    </interactant>
    <interactant intactId="EBI-347978">
        <id>P37198</id>
        <label>NUP62</label>
    </interactant>
    <organismsDiffer>false</organismsDiffer>
    <experiments>3</experiments>
</comment>
<comment type="interaction">
    <interactant intactId="EBI-77818">
        <id>Q13444</id>
    </interactant>
    <interactant intactId="EBI-1051152">
        <id>Q92882</id>
        <label>OSTF1</label>
    </interactant>
    <organismsDiffer>false</organismsDiffer>
    <experiments>2</experiments>
</comment>
<comment type="interaction">
    <interactant intactId="EBI-77818">
        <id>Q13444</id>
    </interactant>
    <interactant intactId="EBI-77926">
        <id>Q9UKS6</id>
        <label>PACSIN3</label>
    </interactant>
    <organismsDiffer>false</organismsDiffer>
    <experiments>3</experiments>
</comment>
<comment type="interaction">
    <interactant intactId="EBI-77818">
        <id>Q13444</id>
    </interactant>
    <interactant intactId="EBI-740322">
        <id>Q93062</id>
        <label>RBPMS</label>
    </interactant>
    <organismsDiffer>false</organismsDiffer>
    <experiments>3</experiments>
</comment>
<comment type="interaction">
    <interactant intactId="EBI-77818">
        <id>Q13444</id>
    </interactant>
    <interactant intactId="EBI-77938">
        <id>Q99962</id>
        <label>SH3GL2</label>
    </interactant>
    <organismsDiffer>false</organismsDiffer>
    <experiments>2</experiments>
</comment>
<comment type="interaction">
    <interactant intactId="EBI-77818">
        <id>Q13444</id>
    </interactant>
    <interactant intactId="EBI-2483234">
        <id>Q5TCZ1</id>
        <label>SH3PXD2A</label>
    </interactant>
    <organismsDiffer>false</organismsDiffer>
    <experiments>4</experiments>
</comment>
<comment type="interaction">
    <interactant intactId="EBI-77818">
        <id>Q13444</id>
    </interactant>
    <interactant intactId="EBI-2481535">
        <id>Q8WV41</id>
        <label>SNX33</label>
    </interactant>
    <organismsDiffer>false</organismsDiffer>
    <experiments>4</experiments>
</comment>
<comment type="interaction">
    <interactant intactId="EBI-77818">
        <id>Q13444</id>
    </interactant>
    <interactant intactId="EBI-77848">
        <id>Q9Y5X1</id>
        <label>SNX9</label>
    </interactant>
    <organismsDiffer>false</organismsDiffer>
    <experiments>4</experiments>
</comment>
<comment type="interaction">
    <interactant intactId="EBI-77818">
        <id>Q13444</id>
    </interactant>
    <interactant intactId="EBI-10198587">
        <id>Q02446</id>
        <label>SP4</label>
    </interactant>
    <organismsDiffer>false</organismsDiffer>
    <experiments>3</experiments>
</comment>
<comment type="interaction">
    <interactant intactId="EBI-77818">
        <id>Q13444</id>
    </interactant>
    <interactant intactId="EBI-621482">
        <id>P12931</id>
        <label>SRC</label>
    </interactant>
    <organismsDiffer>false</organismsDiffer>
    <experiments>4</experiments>
</comment>
<comment type="interaction">
    <interactant intactId="EBI-12137265">
        <id>Q13444-2</id>
    </interactant>
    <interactant intactId="EBI-930964">
        <id>P54253</id>
        <label>ATXN1</label>
    </interactant>
    <organismsDiffer>false</organismsDiffer>
    <experiments>3</experiments>
</comment>
<comment type="interaction">
    <interactant intactId="EBI-12137265">
        <id>Q13444-2</id>
    </interactant>
    <interactant intactId="EBI-5774125">
        <id>A1E959</id>
        <label>ODAM</label>
    </interactant>
    <organismsDiffer>false</organismsDiffer>
    <experiments>3</experiments>
</comment>
<comment type="interaction">
    <interactant intactId="EBI-12137265">
        <id>Q13444-2</id>
    </interactant>
    <interactant intactId="EBI-2481535">
        <id>Q8WV41</id>
        <label>SNX33</label>
    </interactant>
    <organismsDiffer>false</organismsDiffer>
    <experiments>3</experiments>
</comment>
<comment type="subcellular location">
    <subcellularLocation>
        <location evidence="11">Endomembrane system</location>
        <topology evidence="11">Single-pass type I membrane protein</topology>
    </subcellularLocation>
    <subcellularLocation>
        <location evidence="11">Cell junction</location>
        <location evidence="11">Adherens junction</location>
    </subcellularLocation>
    <subcellularLocation>
        <location evidence="1">Cell projection</location>
        <location evidence="1">Cilium</location>
        <location evidence="1">Flagellum</location>
    </subcellularLocation>
    <subcellularLocation>
        <location evidence="1">Cytoplasmic vesicle</location>
        <location evidence="1">Secretory vesicle</location>
        <location evidence="1">Acrosome</location>
    </subcellularLocation>
    <text evidence="1">The majority of the protein is localized in a perinuclear compartment which may correspond to the trans-Golgi network or the late endosome. The pro-protein is the major detectable form on the cell surface, whereas the majority of the protein in the cell is processed (By similarity).</text>
</comment>
<comment type="alternative products">
    <event type="alternative splicing"/>
    <isoform>
        <id>Q13444-1</id>
        <name>1</name>
        <name>6b</name>
        <sequence type="displayed"/>
    </isoform>
    <isoform>
        <id>Q13444-2</id>
        <name>2</name>
        <sequence type="described" ref="VSP_039527"/>
    </isoform>
    <isoform>
        <id>Q13444-3</id>
        <name>3</name>
        <name>6a</name>
        <sequence type="described" ref="VSP_039529"/>
    </isoform>
    <isoform>
        <id>Q13444-4</id>
        <name>4</name>
        <name>4a</name>
        <sequence type="described" ref="VSP_039531"/>
    </isoform>
    <isoform>
        <id>Q13444-5</id>
        <name>5</name>
        <sequence type="described" ref="VSP_039528"/>
    </isoform>
    <isoform>
        <id>Q13444-6</id>
        <name>6</name>
        <name>7b</name>
        <sequence type="described" ref="VSP_039533"/>
    </isoform>
    <isoform>
        <id>Q13444-7</id>
        <name>7</name>
        <name>7a</name>
        <sequence type="described" ref="VSP_039529 VSP_039533"/>
    </isoform>
    <isoform>
        <id>Q13444-8</id>
        <name>8</name>
        <sequence type="described" ref="VSP_039528 VSP_039533"/>
    </isoform>
    <isoform>
        <id>Q13444-9</id>
        <name>9</name>
        <name>3a</name>
        <sequence type="described" ref="VSP_039526 VSP_039532"/>
    </isoform>
    <isoform>
        <id>Q13444-10</id>
        <name>10</name>
        <name>1</name>
        <sequence type="described" ref="VSP_039525 VSP_039530"/>
    </isoform>
    <isoform>
        <id>Q13444-11</id>
        <name>11</name>
        <sequence type="described" ref="VSP_039524 VSP_039527"/>
    </isoform>
    <isoform>
        <id>Q13444-12</id>
        <name>12</name>
        <sequence type="described" ref="VSP_044695 VSP_039527"/>
    </isoform>
    <isoform>
        <id>Q13444-13</id>
        <name>13</name>
        <sequence type="described" ref="VSP_055143 VSP_055144 VSP_055145"/>
    </isoform>
</comment>
<comment type="tissue specificity">
    <text evidence="10 14 18 26">Expressed in colon and small intestine. Expressed in airway smooth muscle and glomerular mesangial cells (at protein level). Ubiquitously expressed. Overexpressed in atherosclerotic lesions. Constitutively expressed in cultured endothelium and smooth muscle. Expressed in chondrocytes. Expressed in airway smooth muscle and glomerular mesangial cells.</text>
</comment>
<comment type="domain">
    <text>The cytoplasmic domain is required for SH3GL2- and SNX9-binding.</text>
</comment>
<comment type="domain">
    <text>Disintegrin domain binds to integrin alphaV-beta3.</text>
</comment>
<comment type="domain">
    <text>The conserved cysteine present in the cysteine-switch motif binds the catalytic zinc ion, thus inhibiting the enzyme. The dissociation of the cysteine from the zinc ion upon the activation-peptide release activates the enzyme.</text>
</comment>
<comment type="PTM">
    <text evidence="1">The precursor is cleaved by a furin endopeptidase.</text>
</comment>
<comment type="PTM">
    <text evidence="9">Phosphorylation increases association with PTKs.</text>
</comment>
<dbReference type="EC" id="3.4.24.-"/>
<dbReference type="EMBL" id="U41767">
    <property type="protein sequence ID" value="AAC50404.1"/>
    <property type="molecule type" value="mRNA"/>
</dbReference>
<dbReference type="EMBL" id="U46005">
    <property type="protein sequence ID" value="AAC51112.1"/>
    <property type="molecule type" value="mRNA"/>
</dbReference>
<dbReference type="EMBL" id="AY518542">
    <property type="protein sequence ID" value="AAR99331.1"/>
    <property type="molecule type" value="mRNA"/>
</dbReference>
<dbReference type="EMBL" id="AF314227">
    <property type="protein sequence ID" value="AAM44189.1"/>
    <property type="molecule type" value="Genomic_DNA"/>
</dbReference>
<dbReference type="EMBL" id="AF314227">
    <property type="protein sequence ID" value="AAS48590.1"/>
    <property type="molecule type" value="Genomic_DNA"/>
</dbReference>
<dbReference type="EMBL" id="AF314227">
    <property type="protein sequence ID" value="AAS48591.1"/>
    <property type="molecule type" value="Genomic_DNA"/>
</dbReference>
<dbReference type="EMBL" id="AF314227">
    <property type="protein sequence ID" value="AAS48592.1"/>
    <property type="molecule type" value="Genomic_DNA"/>
</dbReference>
<dbReference type="EMBL" id="AF314227">
    <property type="protein sequence ID" value="AAS48593.1"/>
    <property type="molecule type" value="Genomic_DNA"/>
</dbReference>
<dbReference type="EMBL" id="AF314227">
    <property type="protein sequence ID" value="AAS48594.1"/>
    <property type="molecule type" value="Genomic_DNA"/>
</dbReference>
<dbReference type="EMBL" id="AF314227">
    <property type="protein sequence ID" value="AAS48595.1"/>
    <property type="molecule type" value="Genomic_DNA"/>
</dbReference>
<dbReference type="EMBL" id="AF314227">
    <property type="protein sequence ID" value="AAS48596.1"/>
    <property type="molecule type" value="Genomic_DNA"/>
</dbReference>
<dbReference type="EMBL" id="AF314227">
    <property type="protein sequence ID" value="AAS48597.1"/>
    <property type="molecule type" value="Genomic_DNA"/>
</dbReference>
<dbReference type="EMBL" id="AF314227">
    <property type="protein sequence ID" value="AAS72298.1"/>
    <property type="molecule type" value="Genomic_DNA"/>
</dbReference>
<dbReference type="EMBL" id="AY560593">
    <property type="protein sequence ID" value="AAS72991.1"/>
    <property type="molecule type" value="mRNA"/>
</dbReference>
<dbReference type="EMBL" id="AY560594">
    <property type="protein sequence ID" value="AAS72992.1"/>
    <property type="molecule type" value="mRNA"/>
</dbReference>
<dbReference type="EMBL" id="AY560595">
    <property type="protein sequence ID" value="AAS72993.1"/>
    <property type="molecule type" value="mRNA"/>
</dbReference>
<dbReference type="EMBL" id="AY560596">
    <property type="protein sequence ID" value="AAS72994.1"/>
    <property type="molecule type" value="mRNA"/>
</dbReference>
<dbReference type="EMBL" id="AY560597">
    <property type="protein sequence ID" value="AAS72995.1"/>
    <property type="molecule type" value="mRNA"/>
</dbReference>
<dbReference type="EMBL" id="AY560598">
    <property type="protein sequence ID" value="AAS72996.1"/>
    <property type="molecule type" value="mRNA"/>
</dbReference>
<dbReference type="EMBL" id="AY560599">
    <property type="protein sequence ID" value="AAS72997.1"/>
    <property type="molecule type" value="mRNA"/>
</dbReference>
<dbReference type="EMBL" id="AY560600">
    <property type="protein sequence ID" value="AAS72998.1"/>
    <property type="molecule type" value="mRNA"/>
</dbReference>
<dbReference type="EMBL" id="AY560601">
    <property type="protein sequence ID" value="AAS72999.1"/>
    <property type="molecule type" value="mRNA"/>
</dbReference>
<dbReference type="EMBL" id="AY576417">
    <property type="protein sequence ID" value="AAS73000.1"/>
    <property type="molecule type" value="mRNA"/>
</dbReference>
<dbReference type="EMBL" id="BT009764">
    <property type="protein sequence ID" value="AAP88766.1"/>
    <property type="molecule type" value="mRNA"/>
</dbReference>
<dbReference type="EMBL" id="AK296925">
    <property type="protein sequence ID" value="BAG59477.1"/>
    <property type="molecule type" value="mRNA"/>
</dbReference>
<dbReference type="EMBL" id="AK297468">
    <property type="protein sequence ID" value="BAG59890.1"/>
    <property type="molecule type" value="mRNA"/>
</dbReference>
<dbReference type="EMBL" id="AK075498">
    <property type="protein sequence ID" value="BAG52157.1"/>
    <property type="molecule type" value="mRNA"/>
</dbReference>
<dbReference type="EMBL" id="AL451085">
    <property type="status" value="NOT_ANNOTATED_CDS"/>
    <property type="molecule type" value="Genomic_DNA"/>
</dbReference>
<dbReference type="EMBL" id="AL691442">
    <property type="status" value="NOT_ANNOTATED_CDS"/>
    <property type="molecule type" value="Genomic_DNA"/>
</dbReference>
<dbReference type="EMBL" id="BC014566">
    <property type="protein sequence ID" value="AAH14566.1"/>
    <property type="molecule type" value="mRNA"/>
</dbReference>
<dbReference type="CCDS" id="CCDS1084.1">
    <molecule id="Q13444-2"/>
</dbReference>
<dbReference type="CCDS" id="CCDS1085.1">
    <molecule id="Q13444-4"/>
</dbReference>
<dbReference type="CCDS" id="CCDS1086.1">
    <molecule id="Q13444-5"/>
</dbReference>
<dbReference type="CCDS" id="CCDS1087.1">
    <molecule id="Q13444-1"/>
</dbReference>
<dbReference type="CCDS" id="CCDS1088.1">
    <molecule id="Q13444-10"/>
</dbReference>
<dbReference type="CCDS" id="CCDS44236.1">
    <molecule id="Q13444-3"/>
</dbReference>
<dbReference type="CCDS" id="CCDS58031.1">
    <molecule id="Q13444-12"/>
</dbReference>
<dbReference type="CCDS" id="CCDS58032.1">
    <molecule id="Q13444-9"/>
</dbReference>
<dbReference type="CCDS" id="CCDS60282.1">
    <molecule id="Q13444-13"/>
</dbReference>
<dbReference type="PIR" id="G02390">
    <property type="entry name" value="G02390"/>
</dbReference>
<dbReference type="RefSeq" id="NP_001248393.1">
    <molecule id="Q13444-12"/>
    <property type="nucleotide sequence ID" value="NM_001261464.2"/>
</dbReference>
<dbReference type="RefSeq" id="NP_001248394.1">
    <molecule id="Q13444-9"/>
    <property type="nucleotide sequence ID" value="NM_001261465.2"/>
</dbReference>
<dbReference type="RefSeq" id="NP_001248395.1">
    <molecule id="Q13444-13"/>
    <property type="nucleotide sequence ID" value="NM_001261466.2"/>
</dbReference>
<dbReference type="RefSeq" id="NP_003806.3">
    <molecule id="Q13444-2"/>
    <property type="nucleotide sequence ID" value="NM_003815.4"/>
</dbReference>
<dbReference type="RefSeq" id="NP_997074.1">
    <molecule id="Q13444-10"/>
    <property type="nucleotide sequence ID" value="NM_207191.3"/>
</dbReference>
<dbReference type="RefSeq" id="NP_997077.1">
    <molecule id="Q13444-4"/>
    <property type="nucleotide sequence ID" value="NM_207194.3"/>
</dbReference>
<dbReference type="RefSeq" id="NP_997078.1">
    <molecule id="Q13444-5"/>
    <property type="nucleotide sequence ID" value="NM_207195.3"/>
</dbReference>
<dbReference type="RefSeq" id="NP_997079.1">
    <molecule id="Q13444-3"/>
    <property type="nucleotide sequence ID" value="NM_207196.3"/>
</dbReference>
<dbReference type="RefSeq" id="NP_997080.1">
    <molecule id="Q13444-1"/>
    <property type="nucleotide sequence ID" value="NM_207197.3"/>
</dbReference>
<dbReference type="SMR" id="Q13444"/>
<dbReference type="BioGRID" id="114287">
    <property type="interactions" value="98"/>
</dbReference>
<dbReference type="CORUM" id="Q13444"/>
<dbReference type="ELM" id="Q13444"/>
<dbReference type="FunCoup" id="Q13444">
    <property type="interactions" value="236"/>
</dbReference>
<dbReference type="IntAct" id="Q13444">
    <property type="interactions" value="58"/>
</dbReference>
<dbReference type="MINT" id="Q13444"/>
<dbReference type="STRING" id="9606.ENSP00000349436"/>
<dbReference type="ChEMBL" id="CHEMBL2331050"/>
<dbReference type="MEROPS" id="M12.215"/>
<dbReference type="TCDB" id="8.A.77.1.10">
    <property type="family name" value="the sheddase (sheddase) family"/>
</dbReference>
<dbReference type="GlyConnect" id="1179">
    <property type="glycosylation" value="22 N-Linked glycans (2 sites)"/>
</dbReference>
<dbReference type="GlyCosmos" id="Q13444">
    <property type="glycosylation" value="5 sites, 21 glycans"/>
</dbReference>
<dbReference type="GlyGen" id="Q13444">
    <property type="glycosylation" value="7 sites, 24 N-linked glycans (3 sites)"/>
</dbReference>
<dbReference type="iPTMnet" id="Q13444"/>
<dbReference type="PhosphoSitePlus" id="Q13444"/>
<dbReference type="SwissPalm" id="Q13444"/>
<dbReference type="BioMuta" id="ADAM15"/>
<dbReference type="DMDM" id="300669614"/>
<dbReference type="jPOST" id="Q13444"/>
<dbReference type="MassIVE" id="Q13444"/>
<dbReference type="PaxDb" id="9606-ENSP00000349436"/>
<dbReference type="PeptideAtlas" id="Q13444"/>
<dbReference type="ProteomicsDB" id="22321"/>
<dbReference type="ProteomicsDB" id="59442">
    <molecule id="Q13444-1"/>
</dbReference>
<dbReference type="ProteomicsDB" id="59443">
    <molecule id="Q13444-10"/>
</dbReference>
<dbReference type="ProteomicsDB" id="59444">
    <molecule id="Q13444-11"/>
</dbReference>
<dbReference type="ProteomicsDB" id="59445">
    <molecule id="Q13444-2"/>
</dbReference>
<dbReference type="ProteomicsDB" id="59446">
    <molecule id="Q13444-3"/>
</dbReference>
<dbReference type="ProteomicsDB" id="59447">
    <molecule id="Q13444-4"/>
</dbReference>
<dbReference type="ProteomicsDB" id="59448">
    <molecule id="Q13444-5"/>
</dbReference>
<dbReference type="ProteomicsDB" id="59449">
    <molecule id="Q13444-6"/>
</dbReference>
<dbReference type="ProteomicsDB" id="59450">
    <molecule id="Q13444-7"/>
</dbReference>
<dbReference type="ProteomicsDB" id="59451">
    <molecule id="Q13444-8"/>
</dbReference>
<dbReference type="ProteomicsDB" id="59452">
    <molecule id="Q13444-9"/>
</dbReference>
<dbReference type="Pumba" id="Q13444"/>
<dbReference type="ABCD" id="Q13444">
    <property type="antibodies" value="1 sequenced antibody"/>
</dbReference>
<dbReference type="Antibodypedia" id="2491">
    <property type="antibodies" value="451 antibodies from 38 providers"/>
</dbReference>
<dbReference type="DNASU" id="8751"/>
<dbReference type="Ensembl" id="ENST00000271836.10">
    <molecule id="Q13444-2"/>
    <property type="protein sequence ID" value="ENSP00000271836.6"/>
    <property type="gene ID" value="ENSG00000143537.14"/>
</dbReference>
<dbReference type="Ensembl" id="ENST00000355956.6">
    <molecule id="Q13444-4"/>
    <property type="protein sequence ID" value="ENSP00000348227.2"/>
    <property type="gene ID" value="ENSG00000143537.14"/>
</dbReference>
<dbReference type="Ensembl" id="ENST00000356955.7">
    <molecule id="Q13444-1"/>
    <property type="protein sequence ID" value="ENSP00000349436.2"/>
    <property type="gene ID" value="ENSG00000143537.14"/>
</dbReference>
<dbReference type="Ensembl" id="ENST00000359280.8">
    <molecule id="Q13444-5"/>
    <property type="protein sequence ID" value="ENSP00000352226.4"/>
    <property type="gene ID" value="ENSG00000143537.14"/>
</dbReference>
<dbReference type="Ensembl" id="ENST00000360674.8">
    <molecule id="Q13444-10"/>
    <property type="protein sequence ID" value="ENSP00000353892.4"/>
    <property type="gene ID" value="ENSG00000143537.14"/>
</dbReference>
<dbReference type="Ensembl" id="ENST00000368412.7">
    <molecule id="Q13444-9"/>
    <property type="protein sequence ID" value="ENSP00000357397.3"/>
    <property type="gene ID" value="ENSG00000143537.14"/>
</dbReference>
<dbReference type="Ensembl" id="ENST00000368413.5">
    <molecule id="Q13444-11"/>
    <property type="protein sequence ID" value="ENSP00000357398.1"/>
    <property type="gene ID" value="ENSG00000143537.14"/>
</dbReference>
<dbReference type="Ensembl" id="ENST00000447332.3">
    <molecule id="Q13444-13"/>
    <property type="protein sequence ID" value="ENSP00000476000.1"/>
    <property type="gene ID" value="ENSG00000143537.14"/>
</dbReference>
<dbReference type="Ensembl" id="ENST00000449910.6">
    <molecule id="Q13444-3"/>
    <property type="protein sequence ID" value="ENSP00000403843.2"/>
    <property type="gene ID" value="ENSG00000143537.14"/>
</dbReference>
<dbReference type="Ensembl" id="ENST00000526491.5">
    <molecule id="Q13444-6"/>
    <property type="protein sequence ID" value="ENSP00000432347.1"/>
    <property type="gene ID" value="ENSG00000143537.14"/>
</dbReference>
<dbReference type="Ensembl" id="ENST00000529473.5">
    <molecule id="Q13444-8"/>
    <property type="protein sequence ID" value="ENSP00000434227.1"/>
    <property type="gene ID" value="ENSG00000143537.14"/>
</dbReference>
<dbReference type="Ensembl" id="ENST00000531455.5">
    <molecule id="Q13444-12"/>
    <property type="protein sequence ID" value="ENSP00000432927.1"/>
    <property type="gene ID" value="ENSG00000143537.14"/>
</dbReference>
<dbReference type="GeneID" id="8751"/>
<dbReference type="KEGG" id="hsa:8751"/>
<dbReference type="MANE-Select" id="ENST00000356955.7">
    <property type="protein sequence ID" value="ENSP00000349436.2"/>
    <property type="RefSeq nucleotide sequence ID" value="NM_207197.3"/>
    <property type="RefSeq protein sequence ID" value="NP_997080.1"/>
</dbReference>
<dbReference type="UCSC" id="uc001fgr.3">
    <molecule id="Q13444-1"/>
    <property type="organism name" value="human"/>
</dbReference>
<dbReference type="AGR" id="HGNC:193"/>
<dbReference type="CTD" id="8751"/>
<dbReference type="DisGeNET" id="8751"/>
<dbReference type="GeneCards" id="ADAM15"/>
<dbReference type="HGNC" id="HGNC:193">
    <property type="gene designation" value="ADAM15"/>
</dbReference>
<dbReference type="HPA" id="ENSG00000143537">
    <property type="expression patterns" value="Low tissue specificity"/>
</dbReference>
<dbReference type="MIM" id="605548">
    <property type="type" value="gene"/>
</dbReference>
<dbReference type="neXtProt" id="NX_Q13444"/>
<dbReference type="OpenTargets" id="ENSG00000143537"/>
<dbReference type="PharmGKB" id="PA24510"/>
<dbReference type="VEuPathDB" id="HostDB:ENSG00000143537"/>
<dbReference type="eggNOG" id="KOG3607">
    <property type="taxonomic scope" value="Eukaryota"/>
</dbReference>
<dbReference type="GeneTree" id="ENSGT00940000159822"/>
<dbReference type="HOGENOM" id="CLU_012714_7_2_1"/>
<dbReference type="InParanoid" id="Q13444"/>
<dbReference type="OMA" id="HADSWAS"/>
<dbReference type="OrthoDB" id="5951731at2759"/>
<dbReference type="PAN-GO" id="Q13444">
    <property type="GO annotations" value="5 GO annotations based on evolutionary models"/>
</dbReference>
<dbReference type="PhylomeDB" id="Q13444"/>
<dbReference type="TreeFam" id="TF314733"/>
<dbReference type="BRENDA" id="3.4.24.B28">
    <property type="organism ID" value="2681"/>
</dbReference>
<dbReference type="PathwayCommons" id="Q13444"/>
<dbReference type="Reactome" id="R-HSA-1474228">
    <property type="pathway name" value="Degradation of the extracellular matrix"/>
</dbReference>
<dbReference type="Reactome" id="R-HSA-8941237">
    <property type="pathway name" value="Invadopodia formation"/>
</dbReference>
<dbReference type="SignaLink" id="Q13444"/>
<dbReference type="SIGNOR" id="Q13444"/>
<dbReference type="BioGRID-ORCS" id="8751">
    <property type="hits" value="13 hits in 1150 CRISPR screens"/>
</dbReference>
<dbReference type="ChiTaRS" id="ADAM15">
    <property type="organism name" value="human"/>
</dbReference>
<dbReference type="GeneWiki" id="ADAM15"/>
<dbReference type="GenomeRNAi" id="8751"/>
<dbReference type="Pharos" id="Q13444">
    <property type="development level" value="Tbio"/>
</dbReference>
<dbReference type="PRO" id="PR:Q13444"/>
<dbReference type="Proteomes" id="UP000005640">
    <property type="component" value="Chromosome 1"/>
</dbReference>
<dbReference type="RNAct" id="Q13444">
    <property type="molecule type" value="protein"/>
</dbReference>
<dbReference type="Bgee" id="ENSG00000143537">
    <property type="expression patterns" value="Expressed in lower esophagus mucosa and 123 other cell types or tissues"/>
</dbReference>
<dbReference type="GO" id="GO:0001669">
    <property type="term" value="C:acrosomal vesicle"/>
    <property type="evidence" value="ECO:0007669"/>
    <property type="project" value="UniProtKB-SubCell"/>
</dbReference>
<dbReference type="GO" id="GO:0005912">
    <property type="term" value="C:adherens junction"/>
    <property type="evidence" value="ECO:0007669"/>
    <property type="project" value="UniProtKB-SubCell"/>
</dbReference>
<dbReference type="GO" id="GO:0009986">
    <property type="term" value="C:cell surface"/>
    <property type="evidence" value="ECO:0000314"/>
    <property type="project" value="UniProtKB"/>
</dbReference>
<dbReference type="GO" id="GO:0070062">
    <property type="term" value="C:extracellular exosome"/>
    <property type="evidence" value="ECO:0000314"/>
    <property type="project" value="UniProtKB"/>
</dbReference>
<dbReference type="GO" id="GO:0005615">
    <property type="term" value="C:extracellular space"/>
    <property type="evidence" value="ECO:0000318"/>
    <property type="project" value="GO_Central"/>
</dbReference>
<dbReference type="GO" id="GO:0031514">
    <property type="term" value="C:motile cilium"/>
    <property type="evidence" value="ECO:0007669"/>
    <property type="project" value="UniProtKB-SubCell"/>
</dbReference>
<dbReference type="GO" id="GO:0005886">
    <property type="term" value="C:plasma membrane"/>
    <property type="evidence" value="ECO:0000304"/>
    <property type="project" value="Reactome"/>
</dbReference>
<dbReference type="GO" id="GO:0034987">
    <property type="term" value="F:immunoglobulin receptor binding"/>
    <property type="evidence" value="ECO:0000353"/>
    <property type="project" value="BHF-UCL"/>
</dbReference>
<dbReference type="GO" id="GO:0005178">
    <property type="term" value="F:integrin binding"/>
    <property type="evidence" value="ECO:0000315"/>
    <property type="project" value="UniProtKB"/>
</dbReference>
<dbReference type="GO" id="GO:0046872">
    <property type="term" value="F:metal ion binding"/>
    <property type="evidence" value="ECO:0007669"/>
    <property type="project" value="UniProtKB-KW"/>
</dbReference>
<dbReference type="GO" id="GO:0004222">
    <property type="term" value="F:metalloendopeptidase activity"/>
    <property type="evidence" value="ECO:0000318"/>
    <property type="project" value="GO_Central"/>
</dbReference>
<dbReference type="GO" id="GO:0008237">
    <property type="term" value="F:metallopeptidase activity"/>
    <property type="evidence" value="ECO:0000314"/>
    <property type="project" value="BHF-UCL"/>
</dbReference>
<dbReference type="GO" id="GO:0017124">
    <property type="term" value="F:SH3 domain binding"/>
    <property type="evidence" value="ECO:0000353"/>
    <property type="project" value="BHF-UCL"/>
</dbReference>
<dbReference type="GO" id="GO:0001525">
    <property type="term" value="P:angiogenesis"/>
    <property type="evidence" value="ECO:0007669"/>
    <property type="project" value="UniProtKB-KW"/>
</dbReference>
<dbReference type="GO" id="GO:0060317">
    <property type="term" value="P:cardiac epithelial to mesenchymal transition"/>
    <property type="evidence" value="ECO:0007669"/>
    <property type="project" value="Ensembl"/>
</dbReference>
<dbReference type="GO" id="GO:0007160">
    <property type="term" value="P:cell-matrix adhesion"/>
    <property type="evidence" value="ECO:0000304"/>
    <property type="project" value="ProtInc"/>
</dbReference>
<dbReference type="GO" id="GO:1904628">
    <property type="term" value="P:cellular response to phorbol 13-acetate 12-myristate"/>
    <property type="evidence" value="ECO:0000314"/>
    <property type="project" value="UniProtKB"/>
</dbReference>
<dbReference type="GO" id="GO:0030574">
    <property type="term" value="P:collagen catabolic process"/>
    <property type="evidence" value="ECO:0007669"/>
    <property type="project" value="UniProtKB-KW"/>
</dbReference>
<dbReference type="GO" id="GO:0022617">
    <property type="term" value="P:extracellular matrix disassembly"/>
    <property type="evidence" value="ECO:0000304"/>
    <property type="project" value="Reactome"/>
</dbReference>
<dbReference type="GO" id="GO:0002418">
    <property type="term" value="P:immune response to tumor cell"/>
    <property type="evidence" value="ECO:0000314"/>
    <property type="project" value="UniProtKB"/>
</dbReference>
<dbReference type="GO" id="GO:0045087">
    <property type="term" value="P:innate immune response"/>
    <property type="evidence" value="ECO:0000314"/>
    <property type="project" value="UniProtKB"/>
</dbReference>
<dbReference type="GO" id="GO:0007229">
    <property type="term" value="P:integrin-mediated signaling pathway"/>
    <property type="evidence" value="ECO:0000315"/>
    <property type="project" value="UniProtKB"/>
</dbReference>
<dbReference type="GO" id="GO:0008584">
    <property type="term" value="P:male gonad development"/>
    <property type="evidence" value="ECO:0007669"/>
    <property type="project" value="Ensembl"/>
</dbReference>
<dbReference type="GO" id="GO:0030308">
    <property type="term" value="P:negative regulation of cell growth"/>
    <property type="evidence" value="ECO:0000315"/>
    <property type="project" value="UniProtKB"/>
</dbReference>
<dbReference type="GO" id="GO:0030336">
    <property type="term" value="P:negative regulation of cell migration"/>
    <property type="evidence" value="ECO:0000315"/>
    <property type="project" value="UniProtKB"/>
</dbReference>
<dbReference type="GO" id="GO:0001953">
    <property type="term" value="P:negative regulation of cell-matrix adhesion"/>
    <property type="evidence" value="ECO:0000315"/>
    <property type="project" value="UniProtKB"/>
</dbReference>
<dbReference type="GO" id="GO:1900121">
    <property type="term" value="P:negative regulation of receptor binding"/>
    <property type="evidence" value="ECO:0000315"/>
    <property type="project" value="UniProtKB"/>
</dbReference>
<dbReference type="GO" id="GO:0006508">
    <property type="term" value="P:proteolysis"/>
    <property type="evidence" value="ECO:0000318"/>
    <property type="project" value="GO_Central"/>
</dbReference>
<dbReference type="GO" id="GO:1990910">
    <property type="term" value="P:response to hypobaric hypoxia"/>
    <property type="evidence" value="ECO:0007669"/>
    <property type="project" value="Ensembl"/>
</dbReference>
<dbReference type="GO" id="GO:0042246">
    <property type="term" value="P:tissue regeneration"/>
    <property type="evidence" value="ECO:0007669"/>
    <property type="project" value="Ensembl"/>
</dbReference>
<dbReference type="CDD" id="cd04269">
    <property type="entry name" value="ZnMc_adamalysin_II_like"/>
    <property type="match status" value="1"/>
</dbReference>
<dbReference type="FunFam" id="3.40.390.10:FF:000014">
    <property type="entry name" value="disintegrin and metalloproteinase domain-containing protein 11"/>
    <property type="match status" value="1"/>
</dbReference>
<dbReference type="FunFam" id="4.10.70.10:FF:000001">
    <property type="entry name" value="Disintegrin and metalloproteinase domain-containing protein 22"/>
    <property type="match status" value="1"/>
</dbReference>
<dbReference type="Gene3D" id="3.40.390.10">
    <property type="entry name" value="Collagenase (Catalytic Domain)"/>
    <property type="match status" value="1"/>
</dbReference>
<dbReference type="Gene3D" id="4.10.70.10">
    <property type="entry name" value="Disintegrin domain"/>
    <property type="match status" value="1"/>
</dbReference>
<dbReference type="Gene3D" id="2.60.120.260">
    <property type="entry name" value="Galactose-binding domain-like"/>
    <property type="match status" value="1"/>
</dbReference>
<dbReference type="InterPro" id="IPR006586">
    <property type="entry name" value="ADAM_Cys-rich"/>
</dbReference>
<dbReference type="InterPro" id="IPR001762">
    <property type="entry name" value="Disintegrin_dom"/>
</dbReference>
<dbReference type="InterPro" id="IPR036436">
    <property type="entry name" value="Disintegrin_dom_sf"/>
</dbReference>
<dbReference type="InterPro" id="IPR000742">
    <property type="entry name" value="EGF-like_dom"/>
</dbReference>
<dbReference type="InterPro" id="IPR024079">
    <property type="entry name" value="MetalloPept_cat_dom_sf"/>
</dbReference>
<dbReference type="InterPro" id="IPR001590">
    <property type="entry name" value="Peptidase_M12B"/>
</dbReference>
<dbReference type="InterPro" id="IPR002870">
    <property type="entry name" value="Peptidase_M12B_N"/>
</dbReference>
<dbReference type="InterPro" id="IPR034027">
    <property type="entry name" value="Reprolysin_adamalysin"/>
</dbReference>
<dbReference type="PANTHER" id="PTHR11905">
    <property type="entry name" value="ADAM A DISINTEGRIN AND METALLOPROTEASE DOMAIN"/>
    <property type="match status" value="1"/>
</dbReference>
<dbReference type="PANTHER" id="PTHR11905:SF130">
    <property type="entry name" value="DISINTEGRIN AND METALLOPROTEINASE DOMAIN-CONTAINING PROTEIN 15"/>
    <property type="match status" value="1"/>
</dbReference>
<dbReference type="Pfam" id="PF08516">
    <property type="entry name" value="ADAM_CR"/>
    <property type="match status" value="1"/>
</dbReference>
<dbReference type="Pfam" id="PF00200">
    <property type="entry name" value="Disintegrin"/>
    <property type="match status" value="1"/>
</dbReference>
<dbReference type="Pfam" id="PF01562">
    <property type="entry name" value="Pep_M12B_propep"/>
    <property type="match status" value="1"/>
</dbReference>
<dbReference type="Pfam" id="PF01421">
    <property type="entry name" value="Reprolysin"/>
    <property type="match status" value="1"/>
</dbReference>
<dbReference type="SMART" id="SM00608">
    <property type="entry name" value="ACR"/>
    <property type="match status" value="1"/>
</dbReference>
<dbReference type="SMART" id="SM00050">
    <property type="entry name" value="DISIN"/>
    <property type="match status" value="1"/>
</dbReference>
<dbReference type="SUPFAM" id="SSF57552">
    <property type="entry name" value="Blood coagulation inhibitor (disintegrin)"/>
    <property type="match status" value="1"/>
</dbReference>
<dbReference type="SUPFAM" id="SSF55486">
    <property type="entry name" value="Metalloproteases ('zincins'), catalytic domain"/>
    <property type="match status" value="1"/>
</dbReference>
<dbReference type="PROSITE" id="PS50215">
    <property type="entry name" value="ADAM_MEPRO"/>
    <property type="match status" value="1"/>
</dbReference>
<dbReference type="PROSITE" id="PS50214">
    <property type="entry name" value="DISINTEGRIN_2"/>
    <property type="match status" value="1"/>
</dbReference>
<dbReference type="PROSITE" id="PS01186">
    <property type="entry name" value="EGF_2"/>
    <property type="match status" value="1"/>
</dbReference>
<dbReference type="PROSITE" id="PS50026">
    <property type="entry name" value="EGF_3"/>
    <property type="match status" value="1"/>
</dbReference>
<dbReference type="PROSITE" id="PS00142">
    <property type="entry name" value="ZINC_PROTEASE"/>
    <property type="match status" value="1"/>
</dbReference>
<gene>
    <name type="primary">ADAM15</name>
    <name type="synonym">MDC15</name>
</gene>
<sequence length="863" mass="92959">MRLALLWALGLLGAGSPLPSWPLPNIGGTEEQQAESEKAPREPLEPQVLQDDLPISLKKVLQTSLPEPLRIKLELDGDSHILELLQNRELVPGRPTLVWYQPDGTRVVSEGHTLENCCYQGRVRGYAGSWVSICTCSGLRGLVVLTPERSYTLEQGPGDLQGPPIISRIQDLHLPGHTCALSWRESVHTQKPPEHPLGQRHIRRRRDVVTETKTVELVIVADHSEAQKYRDFQHLLNRTLEVALLLDTFFRPLNVRVALVGLEAWTQRDLVEISPNPAVTLENFLHWRRAHLLPRLPHDSAQLVTGTSFSGPTVGMAIQNSICSPDFSGGVNMDHSTSILGVASSIAHELGHSLGLDHDLPGNSCPCPGPAPAKTCIMEASTDFLPGLNFSNCSRRALEKALLDGMGSCLFERLPSLPPMAAFCGNMFVEPGEQCDCGFLDDCVDPCCDSLTCQLRPGAQCASDGPCCQNCQLRPSGWQCRPTRGDCDLPEFCPGDSSQCPPDVSLGDGEPCAGGQAVCMHGRCASYAQQCQSLWGPGAQPAAPLCLQTANTRGNAFGSCGRNPSGSYVSCTPRDAICGQLQCQTGRTQPLLGSIRDLLWETIDVNGTELNCSWVHLDLGSDVAQPLLTLPGTACGPGLVCIDHRCQRVDLLGAQECRSKCHGHGVCDSNRHCYCEEGWAPPDCTTQLKATSSLTTGLLLSLLVLLVLVMLGASYWYRARLHQRLCQLKGPTCQYRAAQSGPSERPGPPQRALLARGTKQASALSFPAPPSRPLPPDPVSKRLQAELADRPNPPTRPLPADPVVRSPKSQGPAKPPPPRKPLPADPQGRCPSGDLPGPGAGIPPLVVPSRPAPPPPTVSSLYL</sequence>
<accession>Q13444</accession>
<accession>B3KQU5</accession>
<accession>B4DLB5</accession>
<accession>B4DMH8</accession>
<accession>E9PN65</accession>
<accession>Q13493</accession>
<accession>Q53XQ0</accession>
<accession>Q5SR68</accession>
<accession>Q5SR69</accession>
<accession>Q6R267</accession>
<accession>Q71S61</accession>
<accession>Q71S62</accession>
<accession>Q71S63</accession>
<accession>Q71S64</accession>
<accession>Q71S65</accession>
<accession>Q71S66</accession>
<accession>Q71S67</accession>
<accession>Q71S68</accession>
<accession>Q71S69</accession>
<accession>Q96C78</accession>
<accession>U3KQL5</accession>
<reference key="1">
    <citation type="journal article" date="1996" name="J. Biol. Chem.">
        <title>Metargidin, a membrane-anchored metalloprotease-disintegrin protein with an RGD integrin binding sequence.</title>
        <authorList>
            <person name="Kraetzschmar J."/>
            <person name="Lum L."/>
            <person name="Blobel C.P."/>
        </authorList>
    </citation>
    <scope>NUCLEOTIDE SEQUENCE [MRNA] (ISOFORM 2)</scope>
    <scope>VARIANT THR-191</scope>
    <source>
        <tissue>Mammary carcinoma</tissue>
    </source>
</reference>
<reference key="2">
    <citation type="journal article" date="1997" name="FASEB J.">
        <title>Expression of a disintegrin-like protein in cultured human vascular cells and in vivo.</title>
        <authorList>
            <person name="Herren B."/>
            <person name="Raines E.W."/>
            <person name="Ross R."/>
        </authorList>
    </citation>
    <scope>NUCLEOTIDE SEQUENCE [MRNA] (ISOFORM 2)</scope>
    <scope>VARIANT THR-191</scope>
    <source>
        <tissue>Umbilical vein</tissue>
    </source>
</reference>
<reference key="3">
    <citation type="journal article" date="2005" name="Am. J. Physiol.">
        <title>ADAM-15 inhibits wound healing in human intestinal epithelial cell monolayers.</title>
        <authorList>
            <person name="Charrier L."/>
            <person name="Yan Y."/>
            <person name="Driss A."/>
            <person name="Laboisse C.L."/>
            <person name="Sitaraman S.V."/>
            <person name="Merlin D."/>
        </authorList>
    </citation>
    <scope>NUCLEOTIDE SEQUENCE [MRNA] (ISOFORM 10)</scope>
    <scope>FUNCTION</scope>
    <scope>TISSUE SPECIFICITY</scope>
    <scope>ALTERNATIVE SPLICING (ISOFORM 2)</scope>
</reference>
<reference key="4">
    <citation type="journal article" date="2007" name="BMC Mol. Biol.">
        <title>ADAM15 gene structure and differential alternative exon use in human tissues.</title>
        <authorList>
            <person name="Kleino I."/>
            <person name="Ortiz R.M."/>
            <person name="Huovila A.P."/>
        </authorList>
    </citation>
    <scope>NUCLEOTIDE SEQUENCE [GENOMIC DNA]</scope>
    <scope>ALTERNATIVE SPLICING (ISOFORMS 1; 2; 3; 4; 5; 6; 7; 8; 9; 10)</scope>
    <scope>VARIANT THR-191</scope>
</reference>
<reference key="5">
    <citation type="journal article" date="2008" name="Mol. Cancer Res.">
        <title>Distinct functions of natural ADAM-15 cytoplasmic domain variants in human mammary carcinoma.</title>
        <authorList>
            <person name="Zhong J.L."/>
            <person name="Poghosyan Z."/>
            <person name="Pennington C.J."/>
            <person name="Scott X."/>
            <person name="Handsley M.M."/>
            <person name="Warn A."/>
            <person name="Gavrilovic J."/>
            <person name="Honert K."/>
            <person name="Kruger A."/>
            <person name="Span P.N."/>
            <person name="Sweep F.C."/>
            <person name="Edwards D.R."/>
        </authorList>
    </citation>
    <scope>NUCLEOTIDE SEQUENCE [MRNA] (ISOFORMS 1; 2; 4 AND 10)</scope>
    <scope>ALTERNATIVE SPLICING</scope>
    <scope>INTERACTION WITH GRB2; MAPK1; MAPK3; NCK1; PTK6; SH3PXD2A AND SRC</scope>
</reference>
<reference key="6">
    <citation type="submission" date="2004-02" db="EMBL/GenBank/DDBJ databases">
        <title>Characterization of human ADAM15 gene and promoter, and evidence for alternative exon use.</title>
        <authorList>
            <person name="Karkkainen I."/>
            <person name="Ortiz R.M."/>
            <person name="Huovila A.-P.J."/>
        </authorList>
    </citation>
    <scope>NUCLEOTIDE SEQUENCE [MRNA] (ISOFORMS 1; 2; 3; 4; 5; 6; 7; 8 AND 9)</scope>
    <scope>VARIANT THR-191</scope>
</reference>
<reference key="7">
    <citation type="submission" date="2003-08" db="EMBL/GenBank/DDBJ databases">
        <title>Cloning of human full-length CDSs in BD Creator(TM) system donor vector.</title>
        <authorList>
            <person name="Kalnine N."/>
            <person name="Chen X."/>
            <person name="Rolfs A."/>
            <person name="Halleck A."/>
            <person name="Hines L."/>
            <person name="Eisenstein S."/>
            <person name="Koundinya M."/>
            <person name="Raphael J."/>
            <person name="Moreira D."/>
            <person name="Kelley T."/>
            <person name="LaBaer J."/>
            <person name="Lin Y."/>
            <person name="Phelan M."/>
            <person name="Farmer A."/>
        </authorList>
    </citation>
    <scope>NUCLEOTIDE SEQUENCE [LARGE SCALE MRNA] (ISOFORM 2)</scope>
    <scope>VARIANT THR-191</scope>
</reference>
<reference key="8">
    <citation type="journal article" date="2004" name="Nat. Genet.">
        <title>Complete sequencing and characterization of 21,243 full-length human cDNAs.</title>
        <authorList>
            <person name="Ota T."/>
            <person name="Suzuki Y."/>
            <person name="Nishikawa T."/>
            <person name="Otsuki T."/>
            <person name="Sugiyama T."/>
            <person name="Irie R."/>
            <person name="Wakamatsu A."/>
            <person name="Hayashi K."/>
            <person name="Sato H."/>
            <person name="Nagai K."/>
            <person name="Kimura K."/>
            <person name="Makita H."/>
            <person name="Sekine M."/>
            <person name="Obayashi M."/>
            <person name="Nishi T."/>
            <person name="Shibahara T."/>
            <person name="Tanaka T."/>
            <person name="Ishii S."/>
            <person name="Yamamoto J."/>
            <person name="Saito K."/>
            <person name="Kawai Y."/>
            <person name="Isono Y."/>
            <person name="Nakamura Y."/>
            <person name="Nagahari K."/>
            <person name="Murakami K."/>
            <person name="Yasuda T."/>
            <person name="Iwayanagi T."/>
            <person name="Wagatsuma M."/>
            <person name="Shiratori A."/>
            <person name="Sudo H."/>
            <person name="Hosoiri T."/>
            <person name="Kaku Y."/>
            <person name="Kodaira H."/>
            <person name="Kondo H."/>
            <person name="Sugawara M."/>
            <person name="Takahashi M."/>
            <person name="Kanda K."/>
            <person name="Yokoi T."/>
            <person name="Furuya T."/>
            <person name="Kikkawa E."/>
            <person name="Omura Y."/>
            <person name="Abe K."/>
            <person name="Kamihara K."/>
            <person name="Katsuta N."/>
            <person name="Sato K."/>
            <person name="Tanikawa M."/>
            <person name="Yamazaki M."/>
            <person name="Ninomiya K."/>
            <person name="Ishibashi T."/>
            <person name="Yamashita H."/>
            <person name="Murakawa K."/>
            <person name="Fujimori K."/>
            <person name="Tanai H."/>
            <person name="Kimata M."/>
            <person name="Watanabe M."/>
            <person name="Hiraoka S."/>
            <person name="Chiba Y."/>
            <person name="Ishida S."/>
            <person name="Ono Y."/>
            <person name="Takiguchi S."/>
            <person name="Watanabe S."/>
            <person name="Yosida M."/>
            <person name="Hotuta T."/>
            <person name="Kusano J."/>
            <person name="Kanehori K."/>
            <person name="Takahashi-Fujii A."/>
            <person name="Hara H."/>
            <person name="Tanase T.-O."/>
            <person name="Nomura Y."/>
            <person name="Togiya S."/>
            <person name="Komai F."/>
            <person name="Hara R."/>
            <person name="Takeuchi K."/>
            <person name="Arita M."/>
            <person name="Imose N."/>
            <person name="Musashino K."/>
            <person name="Yuuki H."/>
            <person name="Oshima A."/>
            <person name="Sasaki N."/>
            <person name="Aotsuka S."/>
            <person name="Yoshikawa Y."/>
            <person name="Matsunawa H."/>
            <person name="Ichihara T."/>
            <person name="Shiohata N."/>
            <person name="Sano S."/>
            <person name="Moriya S."/>
            <person name="Momiyama H."/>
            <person name="Satoh N."/>
            <person name="Takami S."/>
            <person name="Terashima Y."/>
            <person name="Suzuki O."/>
            <person name="Nakagawa S."/>
            <person name="Senoh A."/>
            <person name="Mizoguchi H."/>
            <person name="Goto Y."/>
            <person name="Shimizu F."/>
            <person name="Wakebe H."/>
            <person name="Hishigaki H."/>
            <person name="Watanabe T."/>
            <person name="Sugiyama A."/>
            <person name="Takemoto M."/>
            <person name="Kawakami B."/>
            <person name="Yamazaki M."/>
            <person name="Watanabe K."/>
            <person name="Kumagai A."/>
            <person name="Itakura S."/>
            <person name="Fukuzumi Y."/>
            <person name="Fujimori Y."/>
            <person name="Komiyama M."/>
            <person name="Tashiro H."/>
            <person name="Tanigami A."/>
            <person name="Fujiwara T."/>
            <person name="Ono T."/>
            <person name="Yamada K."/>
            <person name="Fujii Y."/>
            <person name="Ozaki K."/>
            <person name="Hirao M."/>
            <person name="Ohmori Y."/>
            <person name="Kawabata A."/>
            <person name="Hikiji T."/>
            <person name="Kobatake N."/>
            <person name="Inagaki H."/>
            <person name="Ikema Y."/>
            <person name="Okamoto S."/>
            <person name="Okitani R."/>
            <person name="Kawakami T."/>
            <person name="Noguchi S."/>
            <person name="Itoh T."/>
            <person name="Shigeta K."/>
            <person name="Senba T."/>
            <person name="Matsumura K."/>
            <person name="Nakajima Y."/>
            <person name="Mizuno T."/>
            <person name="Morinaga M."/>
            <person name="Sasaki M."/>
            <person name="Togashi T."/>
            <person name="Oyama M."/>
            <person name="Hata H."/>
            <person name="Watanabe M."/>
            <person name="Komatsu T."/>
            <person name="Mizushima-Sugano J."/>
            <person name="Satoh T."/>
            <person name="Shirai Y."/>
            <person name="Takahashi Y."/>
            <person name="Nakagawa K."/>
            <person name="Okumura K."/>
            <person name="Nagase T."/>
            <person name="Nomura N."/>
            <person name="Kikuchi H."/>
            <person name="Masuho Y."/>
            <person name="Yamashita R."/>
            <person name="Nakai K."/>
            <person name="Yada T."/>
            <person name="Nakamura Y."/>
            <person name="Ohara O."/>
            <person name="Isogai T."/>
            <person name="Sugano S."/>
        </authorList>
    </citation>
    <scope>NUCLEOTIDE SEQUENCE [LARGE SCALE MRNA] (ISOFORMS 12 AND 13)</scope>
    <scope>VARIANTS THR-191 AND LYS-216</scope>
    <source>
        <tissue>Tongue</tissue>
    </source>
</reference>
<reference key="9">
    <citation type="journal article" date="2005" name="DNA Res.">
        <title>Signal sequence and keyword trap in silico for selection of full-length human cDNAs encoding secretion or membrane proteins from oligo-capped cDNA libraries.</title>
        <authorList>
            <person name="Otsuki T."/>
            <person name="Ota T."/>
            <person name="Nishikawa T."/>
            <person name="Hayashi K."/>
            <person name="Suzuki Y."/>
            <person name="Yamamoto J."/>
            <person name="Wakamatsu A."/>
            <person name="Kimura K."/>
            <person name="Sakamoto K."/>
            <person name="Hatano N."/>
            <person name="Kawai Y."/>
            <person name="Ishii S."/>
            <person name="Saito K."/>
            <person name="Kojima S."/>
            <person name="Sugiyama T."/>
            <person name="Ono T."/>
            <person name="Okano K."/>
            <person name="Yoshikawa Y."/>
            <person name="Aotsuka S."/>
            <person name="Sasaki N."/>
            <person name="Hattori A."/>
            <person name="Okumura K."/>
            <person name="Nagai K."/>
            <person name="Sugano S."/>
            <person name="Isogai T."/>
        </authorList>
    </citation>
    <scope>NUCLEOTIDE SEQUENCE [LARGE SCALE MRNA] (ISOFORM 11)</scope>
    <source>
        <tissue>Embryo</tissue>
    </source>
</reference>
<reference key="10">
    <citation type="journal article" date="2006" name="Nature">
        <title>The DNA sequence and biological annotation of human chromosome 1.</title>
        <authorList>
            <person name="Gregory S.G."/>
            <person name="Barlow K.F."/>
            <person name="McLay K.E."/>
            <person name="Kaul R."/>
            <person name="Swarbreck D."/>
            <person name="Dunham A."/>
            <person name="Scott C.E."/>
            <person name="Howe K.L."/>
            <person name="Woodfine K."/>
            <person name="Spencer C.C.A."/>
            <person name="Jones M.C."/>
            <person name="Gillson C."/>
            <person name="Searle S."/>
            <person name="Zhou Y."/>
            <person name="Kokocinski F."/>
            <person name="McDonald L."/>
            <person name="Evans R."/>
            <person name="Phillips K."/>
            <person name="Atkinson A."/>
            <person name="Cooper R."/>
            <person name="Jones C."/>
            <person name="Hall R.E."/>
            <person name="Andrews T.D."/>
            <person name="Lloyd C."/>
            <person name="Ainscough R."/>
            <person name="Almeida J.P."/>
            <person name="Ambrose K.D."/>
            <person name="Anderson F."/>
            <person name="Andrew R.W."/>
            <person name="Ashwell R.I.S."/>
            <person name="Aubin K."/>
            <person name="Babbage A.K."/>
            <person name="Bagguley C.L."/>
            <person name="Bailey J."/>
            <person name="Beasley H."/>
            <person name="Bethel G."/>
            <person name="Bird C.P."/>
            <person name="Bray-Allen S."/>
            <person name="Brown J.Y."/>
            <person name="Brown A.J."/>
            <person name="Buckley D."/>
            <person name="Burton J."/>
            <person name="Bye J."/>
            <person name="Carder C."/>
            <person name="Chapman J.C."/>
            <person name="Clark S.Y."/>
            <person name="Clarke G."/>
            <person name="Clee C."/>
            <person name="Cobley V."/>
            <person name="Collier R.E."/>
            <person name="Corby N."/>
            <person name="Coville G.J."/>
            <person name="Davies J."/>
            <person name="Deadman R."/>
            <person name="Dunn M."/>
            <person name="Earthrowl M."/>
            <person name="Ellington A.G."/>
            <person name="Errington H."/>
            <person name="Frankish A."/>
            <person name="Frankland J."/>
            <person name="French L."/>
            <person name="Garner P."/>
            <person name="Garnett J."/>
            <person name="Gay L."/>
            <person name="Ghori M.R.J."/>
            <person name="Gibson R."/>
            <person name="Gilby L.M."/>
            <person name="Gillett W."/>
            <person name="Glithero R.J."/>
            <person name="Grafham D.V."/>
            <person name="Griffiths C."/>
            <person name="Griffiths-Jones S."/>
            <person name="Grocock R."/>
            <person name="Hammond S."/>
            <person name="Harrison E.S.I."/>
            <person name="Hart E."/>
            <person name="Haugen E."/>
            <person name="Heath P.D."/>
            <person name="Holmes S."/>
            <person name="Holt K."/>
            <person name="Howden P.J."/>
            <person name="Hunt A.R."/>
            <person name="Hunt S.E."/>
            <person name="Hunter G."/>
            <person name="Isherwood J."/>
            <person name="James R."/>
            <person name="Johnson C."/>
            <person name="Johnson D."/>
            <person name="Joy A."/>
            <person name="Kay M."/>
            <person name="Kershaw J.K."/>
            <person name="Kibukawa M."/>
            <person name="Kimberley A.M."/>
            <person name="King A."/>
            <person name="Knights A.J."/>
            <person name="Lad H."/>
            <person name="Laird G."/>
            <person name="Lawlor S."/>
            <person name="Leongamornlert D.A."/>
            <person name="Lloyd D.M."/>
            <person name="Loveland J."/>
            <person name="Lovell J."/>
            <person name="Lush M.J."/>
            <person name="Lyne R."/>
            <person name="Martin S."/>
            <person name="Mashreghi-Mohammadi M."/>
            <person name="Matthews L."/>
            <person name="Matthews N.S.W."/>
            <person name="McLaren S."/>
            <person name="Milne S."/>
            <person name="Mistry S."/>
            <person name="Moore M.J.F."/>
            <person name="Nickerson T."/>
            <person name="O'Dell C.N."/>
            <person name="Oliver K."/>
            <person name="Palmeiri A."/>
            <person name="Palmer S.A."/>
            <person name="Parker A."/>
            <person name="Patel D."/>
            <person name="Pearce A.V."/>
            <person name="Peck A.I."/>
            <person name="Pelan S."/>
            <person name="Phelps K."/>
            <person name="Phillimore B.J."/>
            <person name="Plumb R."/>
            <person name="Rajan J."/>
            <person name="Raymond C."/>
            <person name="Rouse G."/>
            <person name="Saenphimmachak C."/>
            <person name="Sehra H.K."/>
            <person name="Sheridan E."/>
            <person name="Shownkeen R."/>
            <person name="Sims S."/>
            <person name="Skuce C.D."/>
            <person name="Smith M."/>
            <person name="Steward C."/>
            <person name="Subramanian S."/>
            <person name="Sycamore N."/>
            <person name="Tracey A."/>
            <person name="Tromans A."/>
            <person name="Van Helmond Z."/>
            <person name="Wall M."/>
            <person name="Wallis J.M."/>
            <person name="White S."/>
            <person name="Whitehead S.L."/>
            <person name="Wilkinson J.E."/>
            <person name="Willey D.L."/>
            <person name="Williams H."/>
            <person name="Wilming L."/>
            <person name="Wray P.W."/>
            <person name="Wu Z."/>
            <person name="Coulson A."/>
            <person name="Vaudin M."/>
            <person name="Sulston J.E."/>
            <person name="Durbin R.M."/>
            <person name="Hubbard T."/>
            <person name="Wooster R."/>
            <person name="Dunham I."/>
            <person name="Carter N.P."/>
            <person name="McVean G."/>
            <person name="Ross M.T."/>
            <person name="Harrow J."/>
            <person name="Olson M.V."/>
            <person name="Beck S."/>
            <person name="Rogers J."/>
            <person name="Bentley D.R."/>
        </authorList>
    </citation>
    <scope>NUCLEOTIDE SEQUENCE [LARGE SCALE GENOMIC DNA]</scope>
</reference>
<reference key="11">
    <citation type="journal article" date="2004" name="Genome Res.">
        <title>The status, quality, and expansion of the NIH full-length cDNA project: the Mammalian Gene Collection (MGC).</title>
        <authorList>
            <consortium name="The MGC Project Team"/>
        </authorList>
    </citation>
    <scope>NUCLEOTIDE SEQUENCE [LARGE SCALE MRNA] (ISOFORM 2)</scope>
    <scope>VARIANT THR-191</scope>
    <source>
        <tissue>Kidney</tissue>
    </source>
</reference>
<reference key="12">
    <citation type="journal article" date="1997" name="Biochem. Biophys. Res. Commun.">
        <title>Expression of members of a novel membrane linked metalloproteinase family (ADAM) in human articular chondrocytes.</title>
        <authorList>
            <person name="McKie N."/>
            <person name="Edwards T."/>
            <person name="Dallas D.J."/>
            <person name="Houghton A."/>
            <person name="Stringer B."/>
            <person name="Graham R."/>
            <person name="Russell G."/>
            <person name="Croucher P.I."/>
        </authorList>
    </citation>
    <scope>TISSUE SPECIFICITY</scope>
</reference>
<reference key="13">
    <citation type="journal article" date="1998" name="J. Biol. Chem.">
        <title>Specific interaction of the recombinant disintegrin-like domain of MDC-15 (metargidin, ADAM-15) with integrin alphavbeta3.</title>
        <authorList>
            <person name="Zhang X.P."/>
            <person name="Kamata T."/>
            <person name="Yokoyama K."/>
            <person name="Puzon-McLaughlin W."/>
            <person name="Takada Y."/>
        </authorList>
    </citation>
    <scope>INTERACTION WITH INTEGRIN ALPHAV-BETA3</scope>
</reference>
<reference key="14">
    <citation type="journal article" date="1999" name="J. Biol. Chem.">
        <title>Interaction of the metalloprotease disintegrins MDC9 and MDC15 with two SH3 domain-containing proteins, endophilin I and SH3PX1.</title>
        <authorList>
            <person name="Howard L."/>
            <person name="Nelson K.K."/>
            <person name="Maciewicz R.A."/>
            <person name="Blobel C.P."/>
        </authorList>
    </citation>
    <scope>INTERACTION WITH SH3GL2 AND SNX9</scope>
</reference>
<reference key="15">
    <citation type="journal article" date="1999" name="J. Cell Sci.">
        <title>Interaction of metargidin (ADAM-15) with alphavbeta3 and alpha5beta1 integrins on different haemopoietic cells.</title>
        <authorList>
            <person name="Nath D."/>
            <person name="Slocombe P.M."/>
            <person name="Stephens P.E."/>
            <person name="Warn A."/>
            <person name="Hutchinson G.R."/>
            <person name="Yamada K.M."/>
            <person name="Docherty A.J."/>
            <person name="Murphy G."/>
        </authorList>
    </citation>
    <scope>INTERACTION WITH INTEGRIN ALPHAV-BETA3 AND INTEGRIN ALPHA5-BETA1</scope>
</reference>
<reference key="16">
    <citation type="journal article" date="2002" name="Exp. Cell Res.">
        <title>ADAM15 is an adherens junction molecule whose surface expression can be driven by VE-cadherin.</title>
        <authorList>
            <person name="Ham C."/>
            <person name="Levkau B."/>
            <person name="Raines E.W."/>
            <person name="Herren B."/>
        </authorList>
    </citation>
    <scope>SUBCELLULAR LOCATION</scope>
</reference>
<reference key="17">
    <citation type="journal article" date="2002" name="J. Biol. Chem.">
        <title>Phosphorylation-dependent interactions between ADAM15 cytoplasmic domain and Src family protein-tyrosine kinases.</title>
        <authorList>
            <person name="Poghosyan Z."/>
            <person name="Robbins S.M."/>
            <person name="Houslay M.D."/>
            <person name="Webster A."/>
            <person name="Murphy G."/>
            <person name="Edwards D.R."/>
        </authorList>
    </citation>
    <scope>PHOSPHORYLATION AT TYR-715 AND TYR-735</scope>
    <scope>INTERACTION WITH GRB2; LCK AND HCK</scope>
</reference>
<reference key="18">
    <citation type="journal article" date="2002" name="J. Biol. Chem.">
        <title>The role of ADAM 15 in glomerular mesangial cell migration.</title>
        <authorList>
            <person name="Martin J."/>
            <person name="Eynstone L.V."/>
            <person name="Davies M."/>
            <person name="Williams J.D."/>
            <person name="Steadman R."/>
        </authorList>
    </citation>
    <scope>FUNCTION</scope>
    <scope>TISSUE SPECIFICITY</scope>
</reference>
<reference key="19">
    <citation type="journal article" date="2003" name="J. Biol. Chem.">
        <title>The adaptor protein fish associates with members of the ADAMs family and localizes to podosomes of Src-transformed cells.</title>
        <authorList>
            <person name="Abram C.L."/>
            <person name="Seals D.F."/>
            <person name="Pass I."/>
            <person name="Salinsky D."/>
            <person name="Maurer L."/>
            <person name="Roth T.M."/>
            <person name="Courtneidge S.A."/>
        </authorList>
    </citation>
    <scope>INTERACTION WITH SH3PXD2A</scope>
</reference>
<reference key="20">
    <citation type="journal article" date="2005" name="Arthritis Rheum.">
        <title>Homeostatic effects of the metalloproteinase disintegrin ADAM15 in degenerative cartilage remodeling.</title>
        <authorList>
            <person name="Bohm B.B."/>
            <person name="Aigner T."/>
            <person name="Roy B."/>
            <person name="Brodie T.A."/>
            <person name="Blobel C.P."/>
            <person name="Burkhardt H."/>
        </authorList>
    </citation>
    <scope>FUNCTION</scope>
</reference>
<reference key="21">
    <citation type="journal article" date="2007" name="Am. J. Respir. Cell Mol. Biol.">
        <title>Inhibition of airway smooth muscle adhesion and migration by the disintegrin domain of ADAM-15.</title>
        <authorList>
            <person name="Lu D."/>
            <person name="Xie S."/>
            <person name="Sukkar M.B."/>
            <person name="Lu X."/>
            <person name="Scully M.F."/>
            <person name="Chung K.F."/>
        </authorList>
    </citation>
    <scope>FUNCTION</scope>
    <scope>TISSUE SPECIFICITY</scope>
</reference>
<reference key="22">
    <citation type="journal article" date="2007" name="J. Biol. Chem.">
        <title>ADAM-15/metargidin mediates homotypic aggregation of human T lymphocytes and heterotypic interactions of T lymphocytes with intestinal epithelial cells.</title>
        <authorList>
            <person name="Charrier L."/>
            <person name="Yan Y."/>
            <person name="Nguyen H.T."/>
            <person name="Dalmasso G."/>
            <person name="Laboisse C.L."/>
            <person name="Gewirtz A.T."/>
            <person name="Sitaraman S.V."/>
            <person name="Merlin D."/>
        </authorList>
    </citation>
    <scope>FUNCTION</scope>
    <scope>MUTAGENESIS OF 484-ARG-GLY-485</scope>
</reference>
<reference key="23">
    <citation type="journal article" date="2008" name="Int. J. Biochem. Cell Biol.">
        <title>ADAM15 suppresses cell motility by driving integrin alpha5beta1 cell surface expression via Erk inactivation.</title>
        <authorList>
            <person name="Chen Q."/>
            <person name="Meng L.H."/>
            <person name="Zhu C.H."/>
            <person name="Lin L.P."/>
            <person name="Lu H."/>
            <person name="Ding J."/>
        </authorList>
    </citation>
    <scope>FUNCTION</scope>
</reference>
<reference key="24">
    <citation type="journal article" date="2008" name="J. Biol. Chem.">
        <title>The ectodomain shedding of E-cadherin by ADAM15 supports ErbB receptor activation.</title>
        <authorList>
            <person name="Najy A.J."/>
            <person name="Day K.C."/>
            <person name="Day M.L."/>
        </authorList>
    </citation>
    <scope>FUNCTION</scope>
</reference>
<reference key="25">
    <citation type="journal article" date="2009" name="Biochem. J.">
        <title>Characterization of the catalytic activity of the membrane-anchored metalloproteinase ADAM15 in cell-based assays.</title>
        <authorList>
            <person name="Maretzky T."/>
            <person name="Yang G."/>
            <person name="Ouerfelli O."/>
            <person name="Overall C.M."/>
            <person name="Worpenberg S."/>
            <person name="Hassiepen U."/>
            <person name="Eder J."/>
            <person name="Blobel C.P."/>
        </authorList>
    </citation>
    <scope>ACTIVITY REGULATION</scope>
</reference>
<reference key="26">
    <citation type="journal article" date="2009" name="J. Cell. Biochem.">
        <title>Alternative splicing of ADAM15 regulates its interactions with cellular SH3 proteins.</title>
        <authorList>
            <person name="Kleino I."/>
            <person name="Ortiz R.M."/>
            <person name="Yritys M."/>
            <person name="Huovila A.P."/>
            <person name="Saksela K."/>
        </authorList>
    </citation>
    <scope>INTERACTION WITH HCK; ITSN1; ITSN2; LYN; NCF1; NEPHROCYSTIN; SH3PXD2A; SNX33; SNX9 AND SRC</scope>
</reference>
<feature type="signal peptide" evidence="2">
    <location>
        <begin position="1"/>
        <end position="17"/>
    </location>
</feature>
<feature type="propeptide" id="PRO_0000029082" evidence="1">
    <location>
        <begin position="18"/>
        <end position="206"/>
    </location>
</feature>
<feature type="chain" id="PRO_0000029083" description="Disintegrin and metalloproteinase domain-containing protein 15">
    <location>
        <begin position="207"/>
        <end position="863"/>
    </location>
</feature>
<feature type="topological domain" description="Extracellular" evidence="2">
    <location>
        <begin position="207"/>
        <end position="696"/>
    </location>
</feature>
<feature type="transmembrane region" description="Helical" evidence="2">
    <location>
        <begin position="697"/>
        <end position="717"/>
    </location>
</feature>
<feature type="topological domain" description="Cytoplasmic" evidence="2">
    <location>
        <begin position="718"/>
        <end position="863"/>
    </location>
</feature>
<feature type="domain" description="Peptidase M12B" evidence="5">
    <location>
        <begin position="213"/>
        <end position="414"/>
    </location>
</feature>
<feature type="domain" description="Disintegrin" evidence="3">
    <location>
        <begin position="421"/>
        <end position="508"/>
    </location>
</feature>
<feature type="domain" description="EGF-like" evidence="4">
    <location>
        <begin position="657"/>
        <end position="685"/>
    </location>
</feature>
<feature type="region of interest" description="Disordered" evidence="7">
    <location>
        <begin position="22"/>
        <end position="45"/>
    </location>
</feature>
<feature type="region of interest" description="Disordered" evidence="7">
    <location>
        <begin position="736"/>
        <end position="863"/>
    </location>
</feature>
<feature type="short sequence motif" description="Cysteine switch" evidence="1">
    <location>
        <begin position="177"/>
        <end position="184"/>
    </location>
</feature>
<feature type="short sequence motif" description="Cell attachment site" evidence="3">
    <location>
        <begin position="484"/>
        <end position="486"/>
    </location>
</feature>
<feature type="short sequence motif" description="SH3-binding" evidence="2">
    <location>
        <begin position="815"/>
        <end position="821"/>
    </location>
</feature>
<feature type="short sequence motif" description="SH3-binding" evidence="2">
    <location>
        <begin position="850"/>
        <end position="856"/>
    </location>
</feature>
<feature type="compositionally biased region" description="Basic and acidic residues" evidence="7">
    <location>
        <begin position="35"/>
        <end position="44"/>
    </location>
</feature>
<feature type="compositionally biased region" description="Pro residues" evidence="7">
    <location>
        <begin position="767"/>
        <end position="778"/>
    </location>
</feature>
<feature type="compositionally biased region" description="Basic and acidic residues" evidence="7">
    <location>
        <begin position="779"/>
        <end position="789"/>
    </location>
</feature>
<feature type="compositionally biased region" description="Pro residues" evidence="7">
    <location>
        <begin position="791"/>
        <end position="800"/>
    </location>
</feature>
<feature type="compositionally biased region" description="Pro residues" evidence="7">
    <location>
        <begin position="813"/>
        <end position="824"/>
    </location>
</feature>
<feature type="active site" evidence="5 6">
    <location>
        <position position="349"/>
    </location>
</feature>
<feature type="binding site" description="in inhibited form" evidence="1">
    <location>
        <position position="179"/>
    </location>
    <ligand>
        <name>Zn(2+)</name>
        <dbReference type="ChEBI" id="CHEBI:29105"/>
        <note>catalytic</note>
    </ligand>
</feature>
<feature type="binding site" evidence="1">
    <location>
        <position position="348"/>
    </location>
    <ligand>
        <name>Zn(2+)</name>
        <dbReference type="ChEBI" id="CHEBI:29105"/>
        <note>catalytic</note>
    </ligand>
</feature>
<feature type="binding site" evidence="1">
    <location>
        <position position="352"/>
    </location>
    <ligand>
        <name>Zn(2+)</name>
        <dbReference type="ChEBI" id="CHEBI:29105"/>
        <note>catalytic</note>
    </ligand>
</feature>
<feature type="binding site" evidence="1">
    <location>
        <position position="358"/>
    </location>
    <ligand>
        <name>Zn(2+)</name>
        <dbReference type="ChEBI" id="CHEBI:29105"/>
        <note>catalytic</note>
    </ligand>
</feature>
<feature type="modified residue" description="Phosphotyrosine; by HCK and LCK" evidence="9">
    <location>
        <position position="715"/>
    </location>
</feature>
<feature type="modified residue" description="Phosphotyrosine; by HCK and LCK" evidence="9">
    <location>
        <position position="735"/>
    </location>
</feature>
<feature type="glycosylation site" description="N-linked (GlcNAc...) asparagine" evidence="2">
    <location>
        <position position="237"/>
    </location>
</feature>
<feature type="glycosylation site" description="N-linked (GlcNAc...) asparagine" evidence="2">
    <location>
        <position position="389"/>
    </location>
</feature>
<feature type="glycosylation site" description="N-linked (GlcNAc...) asparagine" evidence="2">
    <location>
        <position position="392"/>
    </location>
</feature>
<feature type="glycosylation site" description="N-linked (GlcNAc...) asparagine" evidence="2">
    <location>
        <position position="606"/>
    </location>
</feature>
<feature type="glycosylation site" description="N-linked (GlcNAc...) asparagine" evidence="2">
    <location>
        <position position="611"/>
    </location>
</feature>
<feature type="disulfide bond" evidence="1">
    <location>
        <begin position="323"/>
        <end position="409"/>
    </location>
</feature>
<feature type="disulfide bond" evidence="1">
    <location>
        <begin position="365"/>
        <end position="393"/>
    </location>
</feature>
<feature type="disulfide bond" evidence="1">
    <location>
        <begin position="367"/>
        <end position="376"/>
    </location>
</feature>
<feature type="disulfide bond" evidence="1">
    <location>
        <begin position="480"/>
        <end position="500"/>
    </location>
</feature>
<feature type="disulfide bond" evidence="1">
    <location>
        <begin position="657"/>
        <end position="667"/>
    </location>
</feature>
<feature type="disulfide bond" evidence="1">
    <location>
        <begin position="661"/>
        <end position="673"/>
    </location>
</feature>
<feature type="disulfide bond" evidence="1">
    <location>
        <begin position="675"/>
        <end position="684"/>
    </location>
</feature>
<feature type="splice variant" id="VSP_044695" description="In isoform 12." evidence="32">
    <original>I</original>
    <variation>IVLSWGVLGPA</variation>
    <location>
        <position position="26"/>
    </location>
</feature>
<feature type="splice variant" id="VSP_055143" description="In isoform 13." evidence="32">
    <original>GGTEEQQAESEKAPREPLEPQVLQDDLPISLKKVLQTSLPEPLRIKLELDGDSHILELLQN</original>
    <variation>VSACNVEAPQVALRSSRQSQRRPRGSPWSPRSFRTISQLASKRCF</variation>
    <location>
        <begin position="27"/>
        <end position="87"/>
    </location>
</feature>
<feature type="splice variant" id="VSP_039524" description="In isoform 11." evidence="35">
    <location>
        <begin position="94"/>
        <end position="387"/>
    </location>
</feature>
<feature type="splice variant" id="VSP_055144" description="In isoform 13." evidence="32">
    <original>CIDHRCQRV</original>
    <variation>SSLGGQDQV</variation>
    <location>
        <begin position="641"/>
        <end position="649"/>
    </location>
</feature>
<feature type="splice variant" id="VSP_055145" description="In isoform 13." evidence="32">
    <location>
        <begin position="650"/>
        <end position="863"/>
    </location>
</feature>
<feature type="splice variant" id="VSP_039525" description="In isoform 10." evidence="33 36 39">
    <original>RAAQSGPSERPGPPQRALLARGTKQASALSFPAPPSR</original>
    <variation>SLRGQPSPHPQGSHCLPTPRAGAHRVTCPAQGLESRP</variation>
    <location>
        <begin position="736"/>
        <end position="772"/>
    </location>
</feature>
<feature type="splice variant" id="VSP_039526" description="In isoform 9." evidence="39">
    <original>AAQSGPSERPGPPQRALLARGTKQASALSFPAPPSRPLPPDPVSKRLQAELADRPNPPTR</original>
    <variation>LVLSASRPPLPGRCRLTLCPRDSSLRGQPSPHPQGSHCLPTPRAGAHRVTCPAQGLESRP</variation>
    <location>
        <begin position="737"/>
        <end position="796"/>
    </location>
</feature>
<feature type="splice variant" id="VSP_039527" description="In isoform 2, isoform 11 and isoform 12." evidence="32 34 35 36 37 38 39 40">
    <location>
        <begin position="760"/>
        <end position="808"/>
    </location>
</feature>
<feature type="splice variant" id="VSP_039528" description="In isoform 5 and isoform 8." evidence="39">
    <location>
        <begin position="760"/>
        <end position="784"/>
    </location>
</feature>
<feature type="splice variant" id="VSP_039529" description="In isoform 3 and isoform 7." evidence="39">
    <location>
        <position position="760"/>
    </location>
</feature>
<feature type="splice variant" id="VSP_039530" description="In isoform 10." evidence="33 36 39">
    <location>
        <begin position="773"/>
        <end position="863"/>
    </location>
</feature>
<feature type="splice variant" id="VSP_039531" description="In isoform 4." evidence="36 39">
    <location>
        <begin position="785"/>
        <end position="808"/>
    </location>
</feature>
<feature type="splice variant" id="VSP_039532" description="In isoform 9." evidence="39">
    <location>
        <begin position="797"/>
        <end position="863"/>
    </location>
</feature>
<feature type="splice variant" id="VSP_039533" description="In isoform 6, isoform 7 and isoform 8." evidence="39">
    <original>SQGPAKPPPPRKPLPADPQGRCPSGDLPGPGAGIPPLVVPSRPAPPPPTVSSLYL</original>
    <variation>VTVGGEKGTASPPT</variation>
    <location>
        <begin position="809"/>
        <end position="863"/>
    </location>
</feature>
<feature type="sequence variant" id="VAR_060315" description="In dbSNP:rs6427128." evidence="13 15 19 25 27 30 31">
    <original>K</original>
    <variation>T</variation>
    <location>
        <position position="191"/>
    </location>
</feature>
<feature type="sequence variant" id="VAR_068970" description="In dbSNP:rs115753757." evidence="13">
    <original>E</original>
    <variation>K</variation>
    <location>
        <position position="216"/>
    </location>
</feature>
<feature type="sequence variant" id="VAR_060316" description="In dbSNP:rs2306122.">
    <original>P</original>
    <variation>H</variation>
    <location>
        <position position="294"/>
    </location>
</feature>
<feature type="mutagenesis site" description="Reduces ADAM15-mediated T-cell aggregation." evidence="17">
    <original>RG</original>
    <variation>SV</variation>
    <location>
        <begin position="484"/>
        <end position="485"/>
    </location>
</feature>
<feature type="sequence conflict" description="In Ref. 9; BAG52157." evidence="41" ref="9">
    <original>I</original>
    <variation>V</variation>
    <location>
        <position position="81"/>
    </location>
</feature>
<feature type="sequence conflict" description="In Ref. 8; BAG59890." evidence="41" ref="8">
    <original>G</original>
    <variation>C</variation>
    <location>
        <position position="104"/>
    </location>
</feature>
<feature type="sequence conflict" description="In Ref. 8; BAG59477." evidence="41" ref="8">
    <original>H</original>
    <variation>Y</variation>
    <location>
        <position position="286"/>
    </location>
</feature>
<feature type="sequence conflict" description="In Ref. 9; BAG52157." evidence="41" ref="9">
    <original>V</original>
    <variation>A</variation>
    <location>
        <position position="649"/>
    </location>
</feature>
<feature type="sequence conflict" description="In Ref. 2; AAC50404." evidence="41" ref="2">
    <original>S</original>
    <variation>G</variation>
    <location>
        <position position="714"/>
    </location>
</feature>
<feature type="sequence conflict" description="In Ref. 1; AAC51112." evidence="41" ref="1">
    <original>A</original>
    <variation>P</variation>
    <location>
        <position position="840"/>
    </location>
</feature>
<organism>
    <name type="scientific">Homo sapiens</name>
    <name type="common">Human</name>
    <dbReference type="NCBI Taxonomy" id="9606"/>
    <lineage>
        <taxon>Eukaryota</taxon>
        <taxon>Metazoa</taxon>
        <taxon>Chordata</taxon>
        <taxon>Craniata</taxon>
        <taxon>Vertebrata</taxon>
        <taxon>Euteleostomi</taxon>
        <taxon>Mammalia</taxon>
        <taxon>Eutheria</taxon>
        <taxon>Euarchontoglires</taxon>
        <taxon>Primates</taxon>
        <taxon>Haplorrhini</taxon>
        <taxon>Catarrhini</taxon>
        <taxon>Hominidae</taxon>
        <taxon>Homo</taxon>
    </lineage>
</organism>
<keyword id="KW-0025">Alternative splicing</keyword>
<keyword id="KW-0037">Angiogenesis</keyword>
<keyword id="KW-0130">Cell adhesion</keyword>
<keyword id="KW-0965">Cell junction</keyword>
<keyword id="KW-0966">Cell projection</keyword>
<keyword id="KW-0969">Cilium</keyword>
<keyword id="KW-0165">Cleavage on pair of basic residues</keyword>
<keyword id="KW-0177">Collagen degradation</keyword>
<keyword id="KW-0968">Cytoplasmic vesicle</keyword>
<keyword id="KW-1015">Disulfide bond</keyword>
<keyword id="KW-0245">EGF-like domain</keyword>
<keyword id="KW-0282">Flagellum</keyword>
<keyword id="KW-0325">Glycoprotein</keyword>
<keyword id="KW-0378">Hydrolase</keyword>
<keyword id="KW-0472">Membrane</keyword>
<keyword id="KW-0479">Metal-binding</keyword>
<keyword id="KW-0482">Metalloprotease</keyword>
<keyword id="KW-0597">Phosphoprotein</keyword>
<keyword id="KW-0645">Protease</keyword>
<keyword id="KW-1267">Proteomics identification</keyword>
<keyword id="KW-1185">Reference proteome</keyword>
<keyword id="KW-0729">SH3-binding</keyword>
<keyword id="KW-0732">Signal</keyword>
<keyword id="KW-0812">Transmembrane</keyword>
<keyword id="KW-1133">Transmembrane helix</keyword>
<keyword id="KW-0862">Zinc</keyword>
<keyword id="KW-0865">Zymogen</keyword>
<name>ADA15_HUMAN</name>
<evidence type="ECO:0000250" key="1"/>
<evidence type="ECO:0000255" key="2"/>
<evidence type="ECO:0000255" key="3">
    <source>
        <dbReference type="PROSITE-ProRule" id="PRU00068"/>
    </source>
</evidence>
<evidence type="ECO:0000255" key="4">
    <source>
        <dbReference type="PROSITE-ProRule" id="PRU00076"/>
    </source>
</evidence>
<evidence type="ECO:0000255" key="5">
    <source>
        <dbReference type="PROSITE-ProRule" id="PRU00276"/>
    </source>
</evidence>
<evidence type="ECO:0000255" key="6">
    <source>
        <dbReference type="PROSITE-ProRule" id="PRU10095"/>
    </source>
</evidence>
<evidence type="ECO:0000256" key="7">
    <source>
        <dbReference type="SAM" id="MobiDB-lite"/>
    </source>
</evidence>
<evidence type="ECO:0000269" key="8">
    <source>
    </source>
</evidence>
<evidence type="ECO:0000269" key="9">
    <source>
    </source>
</evidence>
<evidence type="ECO:0000269" key="10">
    <source>
    </source>
</evidence>
<evidence type="ECO:0000269" key="11">
    <source>
    </source>
</evidence>
<evidence type="ECO:0000269" key="12">
    <source>
    </source>
</evidence>
<evidence type="ECO:0000269" key="13">
    <source>
    </source>
</evidence>
<evidence type="ECO:0000269" key="14">
    <source>
    </source>
</evidence>
<evidence type="ECO:0000269" key="15">
    <source>
    </source>
</evidence>
<evidence type="ECO:0000269" key="16">
    <source>
    </source>
</evidence>
<evidence type="ECO:0000269" key="17">
    <source>
    </source>
</evidence>
<evidence type="ECO:0000269" key="18">
    <source>
    </source>
</evidence>
<evidence type="ECO:0000269" key="19">
    <source>
    </source>
</evidence>
<evidence type="ECO:0000269" key="20">
    <source>
    </source>
</evidence>
<evidence type="ECO:0000269" key="21">
    <source>
    </source>
</evidence>
<evidence type="ECO:0000269" key="22">
    <source>
    </source>
</evidence>
<evidence type="ECO:0000269" key="23">
    <source>
    </source>
</evidence>
<evidence type="ECO:0000269" key="24">
    <source>
    </source>
</evidence>
<evidence type="ECO:0000269" key="25">
    <source>
    </source>
</evidence>
<evidence type="ECO:0000269" key="26">
    <source>
    </source>
</evidence>
<evidence type="ECO:0000269" key="27">
    <source>
    </source>
</evidence>
<evidence type="ECO:0000269" key="28">
    <source>
    </source>
</evidence>
<evidence type="ECO:0000269" key="29">
    <source>
    </source>
</evidence>
<evidence type="ECO:0000269" key="30">
    <source ref="6"/>
</evidence>
<evidence type="ECO:0000269" key="31">
    <source ref="7"/>
</evidence>
<evidence type="ECO:0000303" key="32">
    <source>
    </source>
</evidence>
<evidence type="ECO:0000303" key="33">
    <source>
    </source>
</evidence>
<evidence type="ECO:0000303" key="34">
    <source>
    </source>
</evidence>
<evidence type="ECO:0000303" key="35">
    <source>
    </source>
</evidence>
<evidence type="ECO:0000303" key="36">
    <source>
    </source>
</evidence>
<evidence type="ECO:0000303" key="37">
    <source>
    </source>
</evidence>
<evidence type="ECO:0000303" key="38">
    <source>
    </source>
</evidence>
<evidence type="ECO:0000303" key="39">
    <source ref="6"/>
</evidence>
<evidence type="ECO:0000303" key="40">
    <source ref="7"/>
</evidence>
<evidence type="ECO:0000305" key="41"/>
<proteinExistence type="evidence at protein level"/>
<protein>
    <recommendedName>
        <fullName>Disintegrin and metalloproteinase domain-containing protein 15</fullName>
        <shortName>ADAM 15</shortName>
        <ecNumber>3.4.24.-</ecNumber>
    </recommendedName>
    <alternativeName>
        <fullName>Metalloprotease RGD disintegrin protein</fullName>
    </alternativeName>
    <alternativeName>
        <fullName>Metalloproteinase-like, disintegrin-like, and cysteine-rich protein 15</fullName>
        <shortName>MDC-15</shortName>
    </alternativeName>
    <alternativeName>
        <fullName>Metargidin</fullName>
    </alternativeName>
</protein>